<dbReference type="EC" id="5.4.99.25" evidence="1"/>
<dbReference type="EMBL" id="BA000028">
    <property type="protein sequence ID" value="BAC13557.1"/>
    <property type="molecule type" value="Genomic_DNA"/>
</dbReference>
<dbReference type="RefSeq" id="WP_011066001.1">
    <property type="nucleotide sequence ID" value="NC_004193.1"/>
</dbReference>
<dbReference type="SMR" id="Q8CXG9"/>
<dbReference type="STRING" id="221109.gene:10733841"/>
<dbReference type="KEGG" id="oih:OB1601"/>
<dbReference type="eggNOG" id="COG0130">
    <property type="taxonomic scope" value="Bacteria"/>
</dbReference>
<dbReference type="HOGENOM" id="CLU_032087_0_1_9"/>
<dbReference type="OrthoDB" id="9802309at2"/>
<dbReference type="PhylomeDB" id="Q8CXG9"/>
<dbReference type="Proteomes" id="UP000000822">
    <property type="component" value="Chromosome"/>
</dbReference>
<dbReference type="GO" id="GO:0003723">
    <property type="term" value="F:RNA binding"/>
    <property type="evidence" value="ECO:0007669"/>
    <property type="project" value="InterPro"/>
</dbReference>
<dbReference type="GO" id="GO:0160148">
    <property type="term" value="F:tRNA pseudouridine(55) synthase activity"/>
    <property type="evidence" value="ECO:0007669"/>
    <property type="project" value="UniProtKB-EC"/>
</dbReference>
<dbReference type="GO" id="GO:1990481">
    <property type="term" value="P:mRNA pseudouridine synthesis"/>
    <property type="evidence" value="ECO:0007669"/>
    <property type="project" value="TreeGrafter"/>
</dbReference>
<dbReference type="GO" id="GO:0031119">
    <property type="term" value="P:tRNA pseudouridine synthesis"/>
    <property type="evidence" value="ECO:0007669"/>
    <property type="project" value="UniProtKB-UniRule"/>
</dbReference>
<dbReference type="CDD" id="cd02573">
    <property type="entry name" value="PseudoU_synth_EcTruB"/>
    <property type="match status" value="1"/>
</dbReference>
<dbReference type="FunFam" id="3.30.2350.10:FF:000011">
    <property type="entry name" value="tRNA pseudouridine synthase B"/>
    <property type="match status" value="1"/>
</dbReference>
<dbReference type="Gene3D" id="3.30.2350.10">
    <property type="entry name" value="Pseudouridine synthase"/>
    <property type="match status" value="1"/>
</dbReference>
<dbReference type="HAMAP" id="MF_01080">
    <property type="entry name" value="TruB_bact"/>
    <property type="match status" value="1"/>
</dbReference>
<dbReference type="InterPro" id="IPR020103">
    <property type="entry name" value="PsdUridine_synth_cat_dom_sf"/>
</dbReference>
<dbReference type="InterPro" id="IPR002501">
    <property type="entry name" value="PsdUridine_synth_N"/>
</dbReference>
<dbReference type="InterPro" id="IPR014780">
    <property type="entry name" value="tRNA_psdUridine_synth_TruB"/>
</dbReference>
<dbReference type="InterPro" id="IPR032819">
    <property type="entry name" value="TruB_C"/>
</dbReference>
<dbReference type="NCBIfam" id="TIGR00431">
    <property type="entry name" value="TruB"/>
    <property type="match status" value="1"/>
</dbReference>
<dbReference type="PANTHER" id="PTHR13767:SF2">
    <property type="entry name" value="PSEUDOURIDYLATE SYNTHASE TRUB1"/>
    <property type="match status" value="1"/>
</dbReference>
<dbReference type="PANTHER" id="PTHR13767">
    <property type="entry name" value="TRNA-PSEUDOURIDINE SYNTHASE"/>
    <property type="match status" value="1"/>
</dbReference>
<dbReference type="Pfam" id="PF16198">
    <property type="entry name" value="TruB_C_2"/>
    <property type="match status" value="1"/>
</dbReference>
<dbReference type="Pfam" id="PF01509">
    <property type="entry name" value="TruB_N"/>
    <property type="match status" value="1"/>
</dbReference>
<dbReference type="SUPFAM" id="SSF55120">
    <property type="entry name" value="Pseudouridine synthase"/>
    <property type="match status" value="1"/>
</dbReference>
<accession>Q8CXG9</accession>
<organism>
    <name type="scientific">Oceanobacillus iheyensis (strain DSM 14371 / CIP 107618 / JCM 11309 / KCTC 3954 / HTE831)</name>
    <dbReference type="NCBI Taxonomy" id="221109"/>
    <lineage>
        <taxon>Bacteria</taxon>
        <taxon>Bacillati</taxon>
        <taxon>Bacillota</taxon>
        <taxon>Bacilli</taxon>
        <taxon>Bacillales</taxon>
        <taxon>Bacillaceae</taxon>
        <taxon>Oceanobacillus</taxon>
    </lineage>
</organism>
<proteinExistence type="inferred from homology"/>
<protein>
    <recommendedName>
        <fullName evidence="1">tRNA pseudouridine synthase B</fullName>
        <ecNumber evidence="1">5.4.99.25</ecNumber>
    </recommendedName>
    <alternativeName>
        <fullName evidence="1">tRNA pseudouridine(55) synthase</fullName>
        <shortName evidence="1">Psi55 synthase</shortName>
    </alternativeName>
    <alternativeName>
        <fullName evidence="1">tRNA pseudouridylate synthase</fullName>
    </alternativeName>
    <alternativeName>
        <fullName evidence="1">tRNA-uridine isomerase</fullName>
    </alternativeName>
</protein>
<name>TRUB_OCEIH</name>
<comment type="function">
    <text evidence="1">Responsible for synthesis of pseudouridine from uracil-55 in the psi GC loop of transfer RNAs.</text>
</comment>
<comment type="catalytic activity">
    <reaction evidence="1">
        <text>uridine(55) in tRNA = pseudouridine(55) in tRNA</text>
        <dbReference type="Rhea" id="RHEA:42532"/>
        <dbReference type="Rhea" id="RHEA-COMP:10101"/>
        <dbReference type="Rhea" id="RHEA-COMP:10102"/>
        <dbReference type="ChEBI" id="CHEBI:65314"/>
        <dbReference type="ChEBI" id="CHEBI:65315"/>
        <dbReference type="EC" id="5.4.99.25"/>
    </reaction>
</comment>
<comment type="similarity">
    <text evidence="1">Belongs to the pseudouridine synthase TruB family. Type 1 subfamily.</text>
</comment>
<reference key="1">
    <citation type="journal article" date="2002" name="Nucleic Acids Res.">
        <title>Genome sequence of Oceanobacillus iheyensis isolated from the Iheya Ridge and its unexpected adaptive capabilities to extreme environments.</title>
        <authorList>
            <person name="Takami H."/>
            <person name="Takaki Y."/>
            <person name="Uchiyama I."/>
        </authorList>
    </citation>
    <scope>NUCLEOTIDE SEQUENCE [LARGE SCALE GENOMIC DNA]</scope>
    <source>
        <strain>DSM 14371 / CIP 107618 / JCM 11309 / KCTC 3954 / HTE831</strain>
    </source>
</reference>
<sequence length="303" mass="34417">MHGILPLWKPKGLTSHDCVMRCRRYFKTKKVGHTGTLDPEVEGVLPICIGQATKIVPFLTDTKKVYEATVQLGYSTETEDATGKIVETKEVSDFPTNKNLEEVLQTFIGRTKQIPPMYSAVKVNGKKLYEYARANESVERPVREIEIFELTLTSVDEKNHSFDIRIVCSKGTYIRTLCVDIGKALGYPAHMSLLTRTKTGAFSEKNTVTFDMIEEAVSNQSEERLLEPIINGLQHLEQIEVNEDMEKRILNGQKLSLQRNQPKQTDPFVFVREGNVLAIYQSHPTNEDQIKPVRVFAIEDKKV</sequence>
<feature type="chain" id="PRO_0000121878" description="tRNA pseudouridine synthase B">
    <location>
        <begin position="1"/>
        <end position="303"/>
    </location>
</feature>
<feature type="active site" description="Nucleophile" evidence="1">
    <location>
        <position position="38"/>
    </location>
</feature>
<gene>
    <name evidence="1" type="primary">truB</name>
    <name type="ordered locus">OB1601</name>
</gene>
<keyword id="KW-0413">Isomerase</keyword>
<keyword id="KW-1185">Reference proteome</keyword>
<keyword id="KW-0819">tRNA processing</keyword>
<evidence type="ECO:0000255" key="1">
    <source>
        <dbReference type="HAMAP-Rule" id="MF_01080"/>
    </source>
</evidence>